<comment type="function">
    <text evidence="6 7 8 9 10 11 12">Required for pre-mRNA splicing as component of the activated spliceosome (PubMed:28076346, PubMed:28502770, PubMed:29301961, PubMed:29360106, PubMed:30705154). Component of the PRP19-CDC5L complex that forms an integral part of the spliceosome and is required for activating pre-mRNA splicing. May have a scaffolding role in the spliceosome assembly as it contacts all other components of the core complex. The PRP19-CDC5L complex may also play a role in the response to DNA damage (DDR).</text>
</comment>
<comment type="subunit">
    <text evidence="6 8 9 10 11 12 13">Component of the pre-catalytic and catalytic spliceosome complexes (PubMed:28076346, PubMed:28502770, PubMed:29301961, PubMed:29360106, PubMed:9731529). Component of the postcatalytic spliceosome P complex (PubMed:30705154). Component of the PRP19-CDC5L splicing complex composed of a core complex comprising a homotetramer of PRPF19, CDC5L, PLRG1 and BCAS2, and at least three less stably associated proteins CTNNBL1, CWC15 and HSPA8. Interacts directly in the complex with PRPF19, CDC5L and PLRG1 (PubMed:20176811).</text>
</comment>
<comment type="interaction">
    <interactant intactId="EBI-1050106">
        <id>O75934</id>
    </interactant>
    <interactant intactId="EBI-742064">
        <id>Q03154</id>
        <label>ACY1</label>
    </interactant>
    <organismsDiffer>false</organismsDiffer>
    <experiments>3</experiments>
</comment>
<comment type="interaction">
    <interactant intactId="EBI-1050106">
        <id>O75934</id>
    </interactant>
    <interactant intactId="EBI-745226">
        <id>Q13155</id>
        <label>AIMP2</label>
    </interactant>
    <organismsDiffer>false</organismsDiffer>
    <experiments>12</experiments>
</comment>
<comment type="interaction">
    <interactant intactId="EBI-1050106">
        <id>O75934</id>
    </interactant>
    <interactant intactId="EBI-744556">
        <id>Q96HB5</id>
        <label>CCDC120</label>
    </interactant>
    <organismsDiffer>false</organismsDiffer>
    <experiments>3</experiments>
</comment>
<comment type="interaction">
    <interactant intactId="EBI-1050106">
        <id>O75934</id>
    </interactant>
    <interactant intactId="EBI-12165781">
        <id>Q96LX7-5</id>
        <label>CCDC17</label>
    </interactant>
    <organismsDiffer>false</organismsDiffer>
    <experiments>3</experiments>
</comment>
<comment type="interaction">
    <interactant intactId="EBI-1050106">
        <id>O75934</id>
    </interactant>
    <interactant intactId="EBI-374880">
        <id>Q99459</id>
        <label>CDC5L</label>
    </interactant>
    <organismsDiffer>false</organismsDiffer>
    <experiments>15</experiments>
</comment>
<comment type="interaction">
    <interactant intactId="EBI-1050106">
        <id>O75934</id>
    </interactant>
    <interactant intactId="EBI-947964">
        <id>Q16610</id>
        <label>ECM1</label>
    </interactant>
    <organismsDiffer>false</organismsDiffer>
    <experiments>3</experiments>
</comment>
<comment type="interaction">
    <interactant intactId="EBI-1050106">
        <id>O75934</id>
    </interactant>
    <interactant intactId="EBI-3197883">
        <id>Q9NT22</id>
        <label>EMILIN3</label>
    </interactant>
    <organismsDiffer>false</organismsDiffer>
    <experiments>3</experiments>
</comment>
<comment type="interaction">
    <interactant intactId="EBI-1050106">
        <id>O75934</id>
    </interactant>
    <interactant intactId="EBI-744099">
        <id>Q9H0I2</id>
        <label>ENKD1</label>
    </interactant>
    <organismsDiffer>false</organismsDiffer>
    <experiments>3</experiments>
</comment>
<comment type="interaction">
    <interactant intactId="EBI-1050106">
        <id>O75934</id>
    </interactant>
    <interactant intactId="EBI-12845222">
        <id>Q9NVL1-2</id>
        <label>FAM86C1P</label>
    </interactant>
    <organismsDiffer>false</organismsDiffer>
    <experiments>3</experiments>
</comment>
<comment type="interaction">
    <interactant intactId="EBI-1050106">
        <id>O75934</id>
    </interactant>
    <interactant intactId="EBI-744302">
        <id>P14136</id>
        <label>GFAP</label>
    </interactant>
    <organismsDiffer>false</organismsDiffer>
    <experiments>3</experiments>
</comment>
<comment type="interaction">
    <interactant intactId="EBI-1050106">
        <id>O75934</id>
    </interactant>
    <interactant intactId="EBI-618309">
        <id>Q08379</id>
        <label>GOLGA2</label>
    </interactant>
    <organismsDiffer>false</organismsDiffer>
    <experiments>9</experiments>
</comment>
<comment type="interaction">
    <interactant intactId="EBI-1050106">
        <id>O75934</id>
    </interactant>
    <interactant intactId="EBI-740220">
        <id>O14964</id>
        <label>HGS</label>
    </interactant>
    <organismsDiffer>false</organismsDiffer>
    <experiments>4</experiments>
</comment>
<comment type="interaction">
    <interactant intactId="EBI-1050106">
        <id>O75934</id>
    </interactant>
    <interactant intactId="EBI-7116203">
        <id>O75031</id>
        <label>HSF2BP</label>
    </interactant>
    <organismsDiffer>false</organismsDiffer>
    <experiments>3</experiments>
</comment>
<comment type="interaction">
    <interactant intactId="EBI-1050106">
        <id>O75934</id>
    </interactant>
    <interactant intactId="EBI-12823003">
        <id>P80217-2</id>
        <label>IFI35</label>
    </interactant>
    <organismsDiffer>false</organismsDiffer>
    <experiments>3</experiments>
</comment>
<comment type="interaction">
    <interactant intactId="EBI-1050106">
        <id>O75934</id>
    </interactant>
    <interactant intactId="EBI-747204">
        <id>Q9UKT9</id>
        <label>IKZF3</label>
    </interactant>
    <organismsDiffer>false</organismsDiffer>
    <experiments>5</experiments>
</comment>
<comment type="interaction">
    <interactant intactId="EBI-1050106">
        <id>O75934</id>
    </interactant>
    <interactant intactId="EBI-1055254">
        <id>Q8WXH2</id>
        <label>JPH3</label>
    </interactant>
    <organismsDiffer>false</organismsDiffer>
    <experiments>3</experiments>
</comment>
<comment type="interaction">
    <interactant intactId="EBI-1050106">
        <id>O75934</id>
    </interactant>
    <interactant intactId="EBI-948266">
        <id>O14901</id>
        <label>KLF11</label>
    </interactant>
    <organismsDiffer>false</organismsDiffer>
    <experiments>3</experiments>
</comment>
<comment type="interaction">
    <interactant intactId="EBI-1050106">
        <id>O75934</id>
    </interactant>
    <interactant intactId="EBI-742094">
        <id>P35900</id>
        <label>KRT20</label>
    </interactant>
    <organismsDiffer>false</organismsDiffer>
    <experiments>3</experiments>
</comment>
<comment type="interaction">
    <interactant intactId="EBI-1050106">
        <id>O75934</id>
    </interactant>
    <interactant intactId="EBI-3044087">
        <id>Q7Z3Y8</id>
        <label>KRT27</label>
    </interactant>
    <organismsDiffer>false</organismsDiffer>
    <experiments>3</experiments>
</comment>
<comment type="interaction">
    <interactant intactId="EBI-1050106">
        <id>O75934</id>
    </interactant>
    <interactant intactId="EBI-948001">
        <id>Q15323</id>
        <label>KRT31</label>
    </interactant>
    <organismsDiffer>false</organismsDiffer>
    <experiments>4</experiments>
</comment>
<comment type="interaction">
    <interactant intactId="EBI-1050106">
        <id>O75934</id>
    </interactant>
    <interactant intactId="EBI-1047093">
        <id>O76011</id>
        <label>KRT34</label>
    </interactant>
    <organismsDiffer>false</organismsDiffer>
    <experiments>5</experiments>
</comment>
<comment type="interaction">
    <interactant intactId="EBI-1050106">
        <id>O75934</id>
    </interactant>
    <interactant intactId="EBI-1058674">
        <id>Q92764</id>
        <label>KRT35</label>
    </interactant>
    <organismsDiffer>false</organismsDiffer>
    <experiments>3</experiments>
</comment>
<comment type="interaction">
    <interactant intactId="EBI-1050106">
        <id>O75934</id>
    </interactant>
    <interactant intactId="EBI-11958506">
        <id>O76013-2</id>
        <label>KRT36</label>
    </interactant>
    <organismsDiffer>false</organismsDiffer>
    <experiments>3</experiments>
</comment>
<comment type="interaction">
    <interactant intactId="EBI-1050106">
        <id>O75934</id>
    </interactant>
    <interactant intactId="EBI-1045716">
        <id>O76014</id>
        <label>KRT37</label>
    </interactant>
    <organismsDiffer>false</organismsDiffer>
    <experiments>3</experiments>
</comment>
<comment type="interaction">
    <interactant intactId="EBI-1050106">
        <id>O75934</id>
    </interactant>
    <interactant intactId="EBI-10171697">
        <id>Q6A162</id>
        <label>KRT40</label>
    </interactant>
    <organismsDiffer>false</organismsDiffer>
    <experiments>4</experiments>
</comment>
<comment type="interaction">
    <interactant intactId="EBI-1050106">
        <id>O75934</id>
    </interactant>
    <interactant intactId="EBI-2949715">
        <id>O95678</id>
        <label>KRT75</label>
    </interactant>
    <organismsDiffer>false</organismsDiffer>
    <experiments>3</experiments>
</comment>
<comment type="interaction">
    <interactant intactId="EBI-1050106">
        <id>O75934</id>
    </interactant>
    <interactant intactId="EBI-12805508">
        <id>Q3LI70</id>
        <label>KRTAP19-6</label>
    </interactant>
    <organismsDiffer>false</organismsDiffer>
    <experiments>3</experiments>
</comment>
<comment type="interaction">
    <interactant intactId="EBI-1050106">
        <id>O75934</id>
    </interactant>
    <interactant intactId="EBI-10261141">
        <id>Q8IUC2</id>
        <label>KRTAP8-1</label>
    </interactant>
    <organismsDiffer>false</organismsDiffer>
    <experiments>3</experiments>
</comment>
<comment type="interaction">
    <interactant intactId="EBI-1050106">
        <id>O75934</id>
    </interactant>
    <interactant intactId="EBI-8639312">
        <id>P25800</id>
        <label>LMO1</label>
    </interactant>
    <organismsDiffer>false</organismsDiffer>
    <experiments>3</experiments>
</comment>
<comment type="interaction">
    <interactant intactId="EBI-1050106">
        <id>O75934</id>
    </interactant>
    <interactant intactId="EBI-11959475">
        <id>P25791-3</id>
        <label>LMO2</label>
    </interactant>
    <organismsDiffer>false</organismsDiffer>
    <experiments>3</experiments>
</comment>
<comment type="interaction">
    <interactant intactId="EBI-1050106">
        <id>O75934</id>
    </interactant>
    <interactant intactId="EBI-11742507">
        <id>Q8TAP4-4</id>
        <label>LMO3</label>
    </interactant>
    <organismsDiffer>false</organismsDiffer>
    <experiments>5</experiments>
</comment>
<comment type="interaction">
    <interactant intactId="EBI-1050106">
        <id>O75934</id>
    </interactant>
    <interactant intactId="EBI-2798728">
        <id>P61968</id>
        <label>LMO4</label>
    </interactant>
    <organismsDiffer>false</organismsDiffer>
    <experiments>3</experiments>
</comment>
<comment type="interaction">
    <interactant intactId="EBI-1050106">
        <id>O75934</id>
    </interactant>
    <interactant intactId="EBI-394656">
        <id>Q9NX70</id>
        <label>MED29</label>
    </interactant>
    <organismsDiffer>false</organismsDiffer>
    <experiments>3</experiments>
</comment>
<comment type="interaction">
    <interactant intactId="EBI-1050106">
        <id>O75934</id>
    </interactant>
    <interactant intactId="EBI-2801965">
        <id>Q5JXC2</id>
        <label>MIIP</label>
    </interactant>
    <organismsDiffer>false</organismsDiffer>
    <experiments>3</experiments>
</comment>
<comment type="interaction">
    <interactant intactId="EBI-1050106">
        <id>O75934</id>
    </interactant>
    <interactant intactId="EBI-5662487">
        <id>Q8TDC0</id>
        <label>MYOZ3</label>
    </interactant>
    <organismsDiffer>false</organismsDiffer>
    <experiments>3</experiments>
</comment>
<comment type="interaction">
    <interactant intactId="EBI-1050106">
        <id>O75934</id>
    </interactant>
    <interactant intactId="EBI-2811583">
        <id>Q9BVL2</id>
        <label>NUP58</label>
    </interactant>
    <organismsDiffer>false</organismsDiffer>
    <experiments>3</experiments>
</comment>
<comment type="interaction">
    <interactant intactId="EBI-1050106">
        <id>O75934</id>
    </interactant>
    <interactant intactId="EBI-536879">
        <id>O43482</id>
        <label>OIP5</label>
    </interactant>
    <organismsDiffer>false</organismsDiffer>
    <experiments>3</experiments>
</comment>
<comment type="interaction">
    <interactant intactId="EBI-1050106">
        <id>O75934</id>
    </interactant>
    <interactant intactId="EBI-296331">
        <id>Q02548</id>
        <label>PAX5</label>
    </interactant>
    <organismsDiffer>false</organismsDiffer>
    <experiments>3</experiments>
</comment>
<comment type="interaction">
    <interactant intactId="EBI-1050106">
        <id>O75934</id>
    </interactant>
    <interactant intactId="EBI-634289">
        <id>Q9H0N5</id>
        <label>PCBD2</label>
    </interactant>
    <organismsDiffer>false</organismsDiffer>
    <experiments>3</experiments>
</comment>
<comment type="interaction">
    <interactant intactId="EBI-1050106">
        <id>O75934</id>
    </interactant>
    <interactant intactId="EBI-357275">
        <id>Q99471</id>
        <label>PFDN5</label>
    </interactant>
    <organismsDiffer>false</organismsDiffer>
    <experiments>3</experiments>
</comment>
<comment type="interaction">
    <interactant intactId="EBI-1050106">
        <id>O75934</id>
    </interactant>
    <interactant intactId="EBI-2876622">
        <id>Q9UPG8</id>
        <label>PLAGL2</label>
    </interactant>
    <organismsDiffer>false</organismsDiffer>
    <experiments>3</experiments>
</comment>
<comment type="interaction">
    <interactant intactId="EBI-1050106">
        <id>O75934</id>
    </interactant>
    <interactant intactId="EBI-742388">
        <id>Q9H8W4</id>
        <label>PLEKHF2</label>
    </interactant>
    <organismsDiffer>false</organismsDiffer>
    <experiments>3</experiments>
</comment>
<comment type="interaction">
    <interactant intactId="EBI-1050106">
        <id>O75934</id>
    </interactant>
    <interactant intactId="EBI-1051504">
        <id>O43660</id>
        <label>PLRG1</label>
    </interactant>
    <organismsDiffer>false</organismsDiffer>
    <experiments>4</experiments>
</comment>
<comment type="interaction">
    <interactant intactId="EBI-1050106">
        <id>O75934</id>
    </interactant>
    <interactant intactId="EBI-395746">
        <id>Q9UMS4</id>
        <label>PRPF19</label>
    </interactant>
    <organismsDiffer>false</organismsDiffer>
    <experiments>10</experiments>
</comment>
<comment type="interaction">
    <interactant intactId="EBI-1050106">
        <id>O75934</id>
    </interactant>
    <interactant intactId="EBI-538479">
        <id>Q6P2Q9</id>
        <label>PRPF8</label>
    </interactant>
    <organismsDiffer>false</organismsDiffer>
    <experiments>3</experiments>
</comment>
<comment type="interaction">
    <interactant intactId="EBI-1050106">
        <id>O75934</id>
    </interactant>
    <interactant intactId="EBI-12000762">
        <id>Q7Z5V6-2</id>
        <label>SAXO4</label>
    </interactant>
    <organismsDiffer>false</organismsDiffer>
    <experiments>3</experiments>
</comment>
<comment type="interaction">
    <interactant intactId="EBI-1050106">
        <id>O75934</id>
    </interactant>
    <interactant intactId="EBI-348469">
        <id>Q15427</id>
        <label>SF3B4</label>
    </interactant>
    <organismsDiffer>false</organismsDiffer>
    <experiments>2</experiments>
</comment>
<comment type="interaction">
    <interactant intactId="EBI-1050106">
        <id>O75934</id>
    </interactant>
    <interactant intactId="EBI-358489">
        <id>Q96GM5</id>
        <label>SMARCD1</label>
    </interactant>
    <organismsDiffer>false</organismsDiffer>
    <experiments>3</experiments>
</comment>
<comment type="interaction">
    <interactant intactId="EBI-1050106">
        <id>O75934</id>
    </interactant>
    <interactant intactId="EBI-766589">
        <id>P09234</id>
        <label>SNRPC</label>
    </interactant>
    <organismsDiffer>false</organismsDiffer>
    <experiments>4</experiments>
</comment>
<comment type="interaction">
    <interactant intactId="EBI-1050106">
        <id>O75934</id>
    </interactant>
    <interactant intactId="EBI-12831628">
        <id>Q8WW14-2</id>
        <label>SPMIP5</label>
    </interactant>
    <organismsDiffer>false</organismsDiffer>
    <experiments>3</experiments>
</comment>
<comment type="interaction">
    <interactant intactId="EBI-1050106">
        <id>O75934</id>
    </interactant>
    <interactant intactId="EBI-10269322">
        <id>Q8NCR6</id>
        <label>SPMIP6</label>
    </interactant>
    <organismsDiffer>false</organismsDiffer>
    <experiments>3</experiments>
</comment>
<comment type="interaction">
    <interactant intactId="EBI-1050106">
        <id>O75934</id>
    </interactant>
    <interactant intactId="EBI-533224">
        <id>P15884</id>
        <label>TCF4</label>
    </interactant>
    <organismsDiffer>false</organismsDiffer>
    <experiments>4</experiments>
</comment>
<comment type="interaction">
    <interactant intactId="EBI-1050106">
        <id>O75934</id>
    </interactant>
    <interactant intactId="EBI-740781">
        <id>Q9BT92</id>
        <label>TCHP</label>
    </interactant>
    <organismsDiffer>false</organismsDiffer>
    <experiments>3</experiments>
</comment>
<comment type="interaction">
    <interactant intactId="EBI-1050106">
        <id>O75934</id>
    </interactant>
    <interactant intactId="EBI-11952721">
        <id>Q05BL1</id>
        <label>TP53BP2</label>
    </interactant>
    <organismsDiffer>false</organismsDiffer>
    <experiments>3</experiments>
</comment>
<comment type="interaction">
    <interactant intactId="EBI-1050106">
        <id>O75934</id>
    </interactant>
    <interactant intactId="EBI-2932492">
        <id>Q99757</id>
        <label>TXN2</label>
    </interactant>
    <organismsDiffer>false</organismsDiffer>
    <experiments>3</experiments>
</comment>
<comment type="interaction">
    <interactant intactId="EBI-1050106">
        <id>O75934</id>
    </interactant>
    <interactant intactId="EBI-739895">
        <id>Q8N6Y0</id>
        <label>USHBP1</label>
    </interactant>
    <organismsDiffer>false</organismsDiffer>
    <experiments>3</experiments>
</comment>
<comment type="interaction">
    <interactant intactId="EBI-1050106">
        <id>O75934</id>
    </interactant>
    <interactant intactId="EBI-1001132">
        <id>O95229</id>
        <label>ZWINT</label>
    </interactant>
    <organismsDiffer>false</organismsDiffer>
    <experiments>3</experiments>
</comment>
<comment type="subcellular location">
    <subcellularLocation>
        <location evidence="3 6 8 9 10 11 12">Nucleus</location>
    </subcellularLocation>
    <subcellularLocation>
        <location evidence="4">Nucleus</location>
        <location evidence="4">Nucleolus</location>
    </subcellularLocation>
</comment>
<comment type="tissue specificity">
    <text evidence="2">Ubiquitously expressed.</text>
</comment>
<comment type="similarity">
    <text evidence="16">Belongs to the SPF27 family.</text>
</comment>
<name>SPF27_HUMAN</name>
<evidence type="ECO:0000255" key="1"/>
<evidence type="ECO:0000269" key="2">
    <source>
    </source>
</evidence>
<evidence type="ECO:0000269" key="3">
    <source>
    </source>
</evidence>
<evidence type="ECO:0000269" key="4">
    <source>
    </source>
</evidence>
<evidence type="ECO:0000269" key="5">
    <source>
    </source>
</evidence>
<evidence type="ECO:0000269" key="6">
    <source>
    </source>
</evidence>
<evidence type="ECO:0000269" key="7">
    <source>
    </source>
</evidence>
<evidence type="ECO:0000269" key="8">
    <source>
    </source>
</evidence>
<evidence type="ECO:0000269" key="9">
    <source>
    </source>
</evidence>
<evidence type="ECO:0000269" key="10">
    <source>
    </source>
</evidence>
<evidence type="ECO:0000269" key="11">
    <source>
    </source>
</evidence>
<evidence type="ECO:0000269" key="12">
    <source>
    </source>
</evidence>
<evidence type="ECO:0000269" key="13">
    <source>
    </source>
</evidence>
<evidence type="ECO:0000269" key="14">
    <source ref="7"/>
</evidence>
<evidence type="ECO:0000303" key="15">
    <source>
    </source>
</evidence>
<evidence type="ECO:0000305" key="16"/>
<evidence type="ECO:0007744" key="17">
    <source>
        <dbReference type="PDB" id="5MQF"/>
    </source>
</evidence>
<evidence type="ECO:0007744" key="18">
    <source>
        <dbReference type="PDB" id="5XJC"/>
    </source>
</evidence>
<evidence type="ECO:0007744" key="19">
    <source>
        <dbReference type="PDB" id="5YZG"/>
    </source>
</evidence>
<evidence type="ECO:0007744" key="20">
    <source>
        <dbReference type="PDB" id="5Z56"/>
    </source>
</evidence>
<evidence type="ECO:0007744" key="21">
    <source>
        <dbReference type="PDB" id="5Z57"/>
    </source>
</evidence>
<evidence type="ECO:0007744" key="22">
    <source>
        <dbReference type="PDB" id="6QDV"/>
    </source>
</evidence>
<evidence type="ECO:0007744" key="23">
    <source>
    </source>
</evidence>
<evidence type="ECO:0007744" key="24">
    <source>
    </source>
</evidence>
<evidence type="ECO:0007744" key="25">
    <source>
    </source>
</evidence>
<evidence type="ECO:0007829" key="26">
    <source>
        <dbReference type="PDB" id="6ID1"/>
    </source>
</evidence>
<gene>
    <name type="primary">BCAS2</name>
    <name evidence="15" type="synonym">DAM1</name>
</gene>
<dbReference type="EMBL" id="AF081788">
    <property type="protein sequence ID" value="AAC64059.1"/>
    <property type="molecule type" value="mRNA"/>
</dbReference>
<dbReference type="EMBL" id="AB020623">
    <property type="protein sequence ID" value="BAA34863.1"/>
    <property type="molecule type" value="mRNA"/>
</dbReference>
<dbReference type="EMBL" id="CR542037">
    <property type="protein sequence ID" value="CAG46834.1"/>
    <property type="molecule type" value="mRNA"/>
</dbReference>
<dbReference type="EMBL" id="BT019390">
    <property type="protein sequence ID" value="AAV38197.1"/>
    <property type="molecule type" value="mRNA"/>
</dbReference>
<dbReference type="EMBL" id="AL390241">
    <property type="status" value="NOT_ANNOTATED_CDS"/>
    <property type="molecule type" value="Genomic_DNA"/>
</dbReference>
<dbReference type="EMBL" id="BC005285">
    <property type="protein sequence ID" value="AAH05285.1"/>
    <property type="molecule type" value="mRNA"/>
</dbReference>
<dbReference type="EMBL" id="BC012623">
    <property type="protein sequence ID" value="AAH12623.1"/>
    <property type="molecule type" value="mRNA"/>
</dbReference>
<dbReference type="EMBL" id="BC022880">
    <property type="protein sequence ID" value="AAH22880.1"/>
    <property type="molecule type" value="mRNA"/>
</dbReference>
<dbReference type="CCDS" id="CCDS874.1"/>
<dbReference type="RefSeq" id="NP_005863.1">
    <property type="nucleotide sequence ID" value="NM_005872.3"/>
</dbReference>
<dbReference type="PDB" id="5MQF">
    <property type="method" value="EM"/>
    <property type="resolution" value="5.90 A"/>
    <property type="chains" value="K=1-225"/>
</dbReference>
<dbReference type="PDB" id="5XJC">
    <property type="method" value="EM"/>
    <property type="resolution" value="3.60 A"/>
    <property type="chains" value="K=1-225"/>
</dbReference>
<dbReference type="PDB" id="5YZG">
    <property type="method" value="EM"/>
    <property type="resolution" value="4.10 A"/>
    <property type="chains" value="K=1-225"/>
</dbReference>
<dbReference type="PDB" id="5Z56">
    <property type="method" value="EM"/>
    <property type="resolution" value="5.10 A"/>
    <property type="chains" value="K=1-225"/>
</dbReference>
<dbReference type="PDB" id="5Z57">
    <property type="method" value="EM"/>
    <property type="resolution" value="6.50 A"/>
    <property type="chains" value="K=1-225"/>
</dbReference>
<dbReference type="PDB" id="6FF7">
    <property type="method" value="EM"/>
    <property type="resolution" value="4.50 A"/>
    <property type="chains" value="K=1-225"/>
</dbReference>
<dbReference type="PDB" id="6ICZ">
    <property type="method" value="EM"/>
    <property type="resolution" value="3.00 A"/>
    <property type="chains" value="K=1-225"/>
</dbReference>
<dbReference type="PDB" id="6ID0">
    <property type="method" value="EM"/>
    <property type="resolution" value="2.90 A"/>
    <property type="chains" value="K=1-225"/>
</dbReference>
<dbReference type="PDB" id="6ID1">
    <property type="method" value="EM"/>
    <property type="resolution" value="2.86 A"/>
    <property type="chains" value="K=1-225"/>
</dbReference>
<dbReference type="PDB" id="6QDV">
    <property type="method" value="EM"/>
    <property type="resolution" value="3.30 A"/>
    <property type="chains" value="s=1-225"/>
</dbReference>
<dbReference type="PDB" id="7A5P">
    <property type="method" value="EM"/>
    <property type="resolution" value="5.00 A"/>
    <property type="chains" value="K=1-225"/>
</dbReference>
<dbReference type="PDB" id="7W59">
    <property type="method" value="EM"/>
    <property type="resolution" value="3.60 A"/>
    <property type="chains" value="K=1-225"/>
</dbReference>
<dbReference type="PDB" id="7W5A">
    <property type="method" value="EM"/>
    <property type="resolution" value="3.60 A"/>
    <property type="chains" value="K=1-225"/>
</dbReference>
<dbReference type="PDB" id="7W5B">
    <property type="method" value="EM"/>
    <property type="resolution" value="4.30 A"/>
    <property type="chains" value="K=1-225"/>
</dbReference>
<dbReference type="PDB" id="8C6J">
    <property type="method" value="EM"/>
    <property type="resolution" value="2.80 A"/>
    <property type="chains" value="s=1-225"/>
</dbReference>
<dbReference type="PDB" id="8CH6">
    <property type="method" value="EM"/>
    <property type="resolution" value="5.90 A"/>
    <property type="chains" value="S=1-225"/>
</dbReference>
<dbReference type="PDB" id="8I0T">
    <property type="method" value="EM"/>
    <property type="resolution" value="3.00 A"/>
    <property type="chains" value="Z=1-225"/>
</dbReference>
<dbReference type="PDB" id="8I0U">
    <property type="method" value="EM"/>
    <property type="resolution" value="3.30 A"/>
    <property type="chains" value="Z=1-225"/>
</dbReference>
<dbReference type="PDB" id="8I0V">
    <property type="method" value="EM"/>
    <property type="resolution" value="3.00 A"/>
    <property type="chains" value="Z=1-225"/>
</dbReference>
<dbReference type="PDB" id="8I0W">
    <property type="method" value="EM"/>
    <property type="resolution" value="3.40 A"/>
    <property type="chains" value="K=1-225"/>
</dbReference>
<dbReference type="PDB" id="8RO2">
    <property type="method" value="EM"/>
    <property type="resolution" value="3.50 A"/>
    <property type="chains" value="K=1-225"/>
</dbReference>
<dbReference type="PDB" id="9FMD">
    <property type="method" value="EM"/>
    <property type="resolution" value="3.30 A"/>
    <property type="chains" value="K=1-225"/>
</dbReference>
<dbReference type="PDBsum" id="5MQF"/>
<dbReference type="PDBsum" id="5XJC"/>
<dbReference type="PDBsum" id="5YZG"/>
<dbReference type="PDBsum" id="5Z56"/>
<dbReference type="PDBsum" id="5Z57"/>
<dbReference type="PDBsum" id="6FF7"/>
<dbReference type="PDBsum" id="6ICZ"/>
<dbReference type="PDBsum" id="6ID0"/>
<dbReference type="PDBsum" id="6ID1"/>
<dbReference type="PDBsum" id="6QDV"/>
<dbReference type="PDBsum" id="7A5P"/>
<dbReference type="PDBsum" id="7W59"/>
<dbReference type="PDBsum" id="7W5A"/>
<dbReference type="PDBsum" id="7W5B"/>
<dbReference type="PDBsum" id="8C6J"/>
<dbReference type="PDBsum" id="8CH6"/>
<dbReference type="PDBsum" id="8I0T"/>
<dbReference type="PDBsum" id="8I0U"/>
<dbReference type="PDBsum" id="8I0V"/>
<dbReference type="PDBsum" id="8I0W"/>
<dbReference type="PDBsum" id="8RO2"/>
<dbReference type="PDBsum" id="9FMD"/>
<dbReference type="EMDB" id="EMD-16452"/>
<dbReference type="EMDB" id="EMD-16658"/>
<dbReference type="EMDB" id="EMD-19399"/>
<dbReference type="EMDB" id="EMD-32317"/>
<dbReference type="EMDB" id="EMD-32319"/>
<dbReference type="EMDB" id="EMD-32321"/>
<dbReference type="EMDB" id="EMD-35109"/>
<dbReference type="EMDB" id="EMD-35110"/>
<dbReference type="EMDB" id="EMD-35111"/>
<dbReference type="EMDB" id="EMD-35113"/>
<dbReference type="EMDB" id="EMD-3545"/>
<dbReference type="EMDB" id="EMD-4525"/>
<dbReference type="EMDB" id="EMD-6721"/>
<dbReference type="EMDB" id="EMD-6864"/>
<dbReference type="EMDB" id="EMD-6889"/>
<dbReference type="EMDB" id="EMD-6890"/>
<dbReference type="EMDB" id="EMD-9645"/>
<dbReference type="EMDB" id="EMD-9646"/>
<dbReference type="EMDB" id="EMD-9647"/>
<dbReference type="SMR" id="O75934"/>
<dbReference type="BioGRID" id="115575">
    <property type="interactions" value="302"/>
</dbReference>
<dbReference type="ComplexPortal" id="CPX-5824">
    <property type="entry name" value="PRP19-CDC5L complex"/>
</dbReference>
<dbReference type="CORUM" id="O75934"/>
<dbReference type="FunCoup" id="O75934">
    <property type="interactions" value="2596"/>
</dbReference>
<dbReference type="IntAct" id="O75934">
    <property type="interactions" value="177"/>
</dbReference>
<dbReference type="MINT" id="O75934"/>
<dbReference type="STRING" id="9606.ENSP00000358554"/>
<dbReference type="GlyGen" id="O75934">
    <property type="glycosylation" value="1 site, 1 O-linked glycan (1 site)"/>
</dbReference>
<dbReference type="iPTMnet" id="O75934"/>
<dbReference type="PhosphoSitePlus" id="O75934"/>
<dbReference type="SwissPalm" id="O75934"/>
<dbReference type="BioMuta" id="BCAS2"/>
<dbReference type="jPOST" id="O75934"/>
<dbReference type="MassIVE" id="O75934"/>
<dbReference type="PaxDb" id="9606-ENSP00000358554"/>
<dbReference type="PeptideAtlas" id="O75934"/>
<dbReference type="ProteomicsDB" id="50297"/>
<dbReference type="Pumba" id="O75934"/>
<dbReference type="TopDownProteomics" id="O75934"/>
<dbReference type="Antibodypedia" id="33860">
    <property type="antibodies" value="353 antibodies from 33 providers"/>
</dbReference>
<dbReference type="DNASU" id="10286"/>
<dbReference type="Ensembl" id="ENST00000369541.4">
    <property type="protein sequence ID" value="ENSP00000358554.3"/>
    <property type="gene ID" value="ENSG00000116752.6"/>
</dbReference>
<dbReference type="GeneID" id="10286"/>
<dbReference type="KEGG" id="hsa:10286"/>
<dbReference type="MANE-Select" id="ENST00000369541.4">
    <property type="protein sequence ID" value="ENSP00000358554.3"/>
    <property type="RefSeq nucleotide sequence ID" value="NM_005872.3"/>
    <property type="RefSeq protein sequence ID" value="NP_005863.1"/>
</dbReference>
<dbReference type="UCSC" id="uc001efa.4">
    <property type="organism name" value="human"/>
</dbReference>
<dbReference type="AGR" id="HGNC:975"/>
<dbReference type="CTD" id="10286"/>
<dbReference type="DisGeNET" id="10286"/>
<dbReference type="GeneCards" id="BCAS2"/>
<dbReference type="HGNC" id="HGNC:975">
    <property type="gene designation" value="BCAS2"/>
</dbReference>
<dbReference type="HPA" id="ENSG00000116752">
    <property type="expression patterns" value="Low tissue specificity"/>
</dbReference>
<dbReference type="MIM" id="605783">
    <property type="type" value="gene"/>
</dbReference>
<dbReference type="neXtProt" id="NX_O75934"/>
<dbReference type="OpenTargets" id="ENSG00000116752"/>
<dbReference type="PharmGKB" id="PA25285"/>
<dbReference type="VEuPathDB" id="HostDB:ENSG00000116752"/>
<dbReference type="eggNOG" id="KOG3096">
    <property type="taxonomic scope" value="Eukaryota"/>
</dbReference>
<dbReference type="GeneTree" id="ENSGT00390000014494"/>
<dbReference type="HOGENOM" id="CLU_082523_2_1_1"/>
<dbReference type="InParanoid" id="O75934"/>
<dbReference type="OMA" id="SAWQESI"/>
<dbReference type="OrthoDB" id="205794at2759"/>
<dbReference type="PAN-GO" id="O75934">
    <property type="GO annotations" value="2 GO annotations based on evolutionary models"/>
</dbReference>
<dbReference type="PhylomeDB" id="O75934"/>
<dbReference type="TreeFam" id="TF105818"/>
<dbReference type="PathwayCommons" id="O75934"/>
<dbReference type="Reactome" id="R-HSA-72163">
    <property type="pathway name" value="mRNA Splicing - Major Pathway"/>
</dbReference>
<dbReference type="SignaLink" id="O75934"/>
<dbReference type="SIGNOR" id="O75934"/>
<dbReference type="BioGRID-ORCS" id="10286">
    <property type="hits" value="655 hits in 1163 CRISPR screens"/>
</dbReference>
<dbReference type="CD-CODE" id="804901D1">
    <property type="entry name" value="Nuclear speckle"/>
</dbReference>
<dbReference type="CD-CODE" id="91857CE7">
    <property type="entry name" value="Nucleolus"/>
</dbReference>
<dbReference type="ChiTaRS" id="BCAS2">
    <property type="organism name" value="human"/>
</dbReference>
<dbReference type="GeneWiki" id="BCAS2"/>
<dbReference type="GenomeRNAi" id="10286"/>
<dbReference type="Pharos" id="O75934">
    <property type="development level" value="Tbio"/>
</dbReference>
<dbReference type="PRO" id="PR:O75934"/>
<dbReference type="Proteomes" id="UP000005640">
    <property type="component" value="Chromosome 1"/>
</dbReference>
<dbReference type="RNAct" id="O75934">
    <property type="molecule type" value="protein"/>
</dbReference>
<dbReference type="Bgee" id="ENSG00000116752">
    <property type="expression patterns" value="Expressed in secondary oocyte and 211 other cell types or tissues"/>
</dbReference>
<dbReference type="ExpressionAtlas" id="O75934">
    <property type="expression patterns" value="baseline and differential"/>
</dbReference>
<dbReference type="GO" id="GO:0071013">
    <property type="term" value="C:catalytic step 2 spliceosome"/>
    <property type="evidence" value="ECO:0000318"/>
    <property type="project" value="GO_Central"/>
</dbReference>
<dbReference type="GO" id="GO:0005813">
    <property type="term" value="C:centrosome"/>
    <property type="evidence" value="ECO:0000314"/>
    <property type="project" value="HPA"/>
</dbReference>
<dbReference type="GO" id="GO:0016607">
    <property type="term" value="C:nuclear speck"/>
    <property type="evidence" value="ECO:0000314"/>
    <property type="project" value="HPA"/>
</dbReference>
<dbReference type="GO" id="GO:0005730">
    <property type="term" value="C:nucleolus"/>
    <property type="evidence" value="ECO:0007669"/>
    <property type="project" value="UniProtKB-SubCell"/>
</dbReference>
<dbReference type="GO" id="GO:0005654">
    <property type="term" value="C:nucleoplasm"/>
    <property type="evidence" value="ECO:0000304"/>
    <property type="project" value="Reactome"/>
</dbReference>
<dbReference type="GO" id="GO:0005634">
    <property type="term" value="C:nucleus"/>
    <property type="evidence" value="ECO:0000314"/>
    <property type="project" value="UniProtKB"/>
</dbReference>
<dbReference type="GO" id="GO:0000974">
    <property type="term" value="C:Prp19 complex"/>
    <property type="evidence" value="ECO:0000353"/>
    <property type="project" value="ComplexPortal"/>
</dbReference>
<dbReference type="GO" id="GO:0005681">
    <property type="term" value="C:spliceosomal complex"/>
    <property type="evidence" value="ECO:0000314"/>
    <property type="project" value="MGI"/>
</dbReference>
<dbReference type="GO" id="GO:0071007">
    <property type="term" value="C:U2-type catalytic step 2 spliceosome"/>
    <property type="evidence" value="ECO:0000314"/>
    <property type="project" value="UniProtKB"/>
</dbReference>
<dbReference type="GO" id="GO:0000380">
    <property type="term" value="P:alternative mRNA splicing, via spliceosome"/>
    <property type="evidence" value="ECO:0007669"/>
    <property type="project" value="Ensembl"/>
</dbReference>
<dbReference type="GO" id="GO:0000398">
    <property type="term" value="P:mRNA splicing, via spliceosome"/>
    <property type="evidence" value="ECO:0000314"/>
    <property type="project" value="UniProtKB"/>
</dbReference>
<dbReference type="GO" id="GO:0048599">
    <property type="term" value="P:oocyte development"/>
    <property type="evidence" value="ECO:0007669"/>
    <property type="project" value="Ensembl"/>
</dbReference>
<dbReference type="GO" id="GO:0001541">
    <property type="term" value="P:ovarian follicle development"/>
    <property type="evidence" value="ECO:0007669"/>
    <property type="project" value="Ensembl"/>
</dbReference>
<dbReference type="GO" id="GO:0030163">
    <property type="term" value="P:protein catabolic process"/>
    <property type="evidence" value="ECO:0007669"/>
    <property type="project" value="Ensembl"/>
</dbReference>
<dbReference type="GO" id="GO:0008380">
    <property type="term" value="P:RNA splicing"/>
    <property type="evidence" value="ECO:0000304"/>
    <property type="project" value="UniProtKB"/>
</dbReference>
<dbReference type="GO" id="GO:0000375">
    <property type="term" value="P:RNA splicing, via transesterification reactions"/>
    <property type="evidence" value="ECO:0000304"/>
    <property type="project" value="UniProtKB"/>
</dbReference>
<dbReference type="GO" id="GO:0051225">
    <property type="term" value="P:spindle assembly"/>
    <property type="evidence" value="ECO:0007669"/>
    <property type="project" value="Ensembl"/>
</dbReference>
<dbReference type="InterPro" id="IPR008409">
    <property type="entry name" value="SPF27"/>
</dbReference>
<dbReference type="PANTHER" id="PTHR13296">
    <property type="entry name" value="BCAS2 PROTEIN"/>
    <property type="match status" value="1"/>
</dbReference>
<dbReference type="PANTHER" id="PTHR13296:SF0">
    <property type="entry name" value="PRE-MRNA-SPLICING FACTOR SPF27"/>
    <property type="match status" value="1"/>
</dbReference>
<dbReference type="Pfam" id="PF05700">
    <property type="entry name" value="BCAS2"/>
    <property type="match status" value="1"/>
</dbReference>
<feature type="initiator methionine" description="Removed" evidence="14 23 24">
    <location>
        <position position="1"/>
    </location>
</feature>
<feature type="chain" id="PRO_0000064861" description="Pre-mRNA-splicing factor SPF27">
    <location>
        <begin position="2"/>
        <end position="225"/>
    </location>
</feature>
<feature type="coiled-coil region" evidence="1">
    <location>
        <begin position="138"/>
        <end position="222"/>
    </location>
</feature>
<feature type="modified residue" description="N-acetylalanine" evidence="14 23 24">
    <location>
        <position position="2"/>
    </location>
</feature>
<feature type="modified residue" description="Phosphoserine" evidence="25">
    <location>
        <position position="94"/>
    </location>
</feature>
<feature type="sequence variant" id="VAR_035799" description="In a colorectal cancer sample; somatic mutation; dbSNP:rs1197668726." evidence="5">
    <original>N</original>
    <variation>S</variation>
    <location>
        <position position="139"/>
    </location>
</feature>
<feature type="sequence conflict" description="In Ref. 3; CAG46834." evidence="16" ref="3">
    <original>E</original>
    <variation>D</variation>
    <location>
        <position position="24"/>
    </location>
</feature>
<feature type="sequence conflict" description="In Ref. 3; CAG46834." evidence="16" ref="3">
    <original>L</original>
    <variation>V</variation>
    <location>
        <position position="89"/>
    </location>
</feature>
<feature type="turn" evidence="26">
    <location>
        <begin position="17"/>
        <end position="19"/>
    </location>
</feature>
<feature type="helix" evidence="26">
    <location>
        <begin position="29"/>
        <end position="42"/>
    </location>
</feature>
<feature type="helix" evidence="26">
    <location>
        <begin position="66"/>
        <end position="76"/>
    </location>
</feature>
<feature type="strand" evidence="26">
    <location>
        <begin position="87"/>
        <end position="89"/>
    </location>
</feature>
<feature type="helix" evidence="26">
    <location>
        <begin position="106"/>
        <end position="134"/>
    </location>
</feature>
<feature type="helix" evidence="26">
    <location>
        <begin position="137"/>
        <end position="198"/>
    </location>
</feature>
<accession>O75934</accession>
<accession>Q6FGS0</accession>
<protein>
    <recommendedName>
        <fullName>Pre-mRNA-splicing factor SPF27</fullName>
    </recommendedName>
    <alternativeName>
        <fullName>Breast carcinoma-amplified sequence 2</fullName>
    </alternativeName>
    <alternativeName>
        <fullName>DNA amplified in mammary carcinoma 1 protein</fullName>
    </alternativeName>
    <alternativeName>
        <fullName>Spliceosome-associated protein SPF 27</fullName>
    </alternativeName>
</protein>
<keyword id="KW-0002">3D-structure</keyword>
<keyword id="KW-0007">Acetylation</keyword>
<keyword id="KW-0175">Coiled coil</keyword>
<keyword id="KW-0903">Direct protein sequencing</keyword>
<keyword id="KW-0507">mRNA processing</keyword>
<keyword id="KW-0508">mRNA splicing</keyword>
<keyword id="KW-0539">Nucleus</keyword>
<keyword id="KW-0597">Phosphoprotein</keyword>
<keyword id="KW-1267">Proteomics identification</keyword>
<keyword id="KW-1185">Reference proteome</keyword>
<keyword id="KW-0747">Spliceosome</keyword>
<proteinExistence type="evidence at protein level"/>
<reference key="1">
    <citation type="journal article" date="1998" name="Nat. Genet.">
        <title>Mass spectrometry and EST-database searching allows characterization of the multi-protein spliceosome complex.</title>
        <authorList>
            <person name="Neubauer G."/>
            <person name="King A."/>
            <person name="Rappsilber J."/>
            <person name="Calvio C."/>
            <person name="Watson M."/>
            <person name="Ajuh P."/>
            <person name="Sleeman J."/>
            <person name="Lamond A.I."/>
            <person name="Mann M."/>
        </authorList>
    </citation>
    <scope>NUCLEOTIDE SEQUENCE [MRNA]</scope>
    <scope>IDENTIFICATION BY MASS SPECTROMETRY</scope>
    <scope>IDENTIFICATION IN THE SPLICEOSOME COMPLEX</scope>
</reference>
<reference key="2">
    <citation type="journal article" date="1999" name="Cancer Lett.">
        <title>Identification of a novel gene, DAM1, amplified at chromosome 1p13.3-21 region in human breast cancer cell lines.</title>
        <authorList>
            <person name="Nagasaki K."/>
            <person name="Maass N."/>
            <person name="Manabe T."/>
            <person name="Hanzawa H."/>
            <person name="Tsukada T."/>
            <person name="Kikuchi K."/>
            <person name="Yamaguchi K."/>
        </authorList>
    </citation>
    <scope>NUCLEOTIDE SEQUENCE [MRNA]</scope>
    <scope>TISSUE SPECIFICITY</scope>
</reference>
<reference key="3">
    <citation type="submission" date="2004-06" db="EMBL/GenBank/DDBJ databases">
        <title>Cloning of human full open reading frames in Gateway(TM) system entry vector (pDONR201).</title>
        <authorList>
            <person name="Ebert L."/>
            <person name="Schick M."/>
            <person name="Neubert P."/>
            <person name="Schatten R."/>
            <person name="Henze S."/>
            <person name="Korn B."/>
        </authorList>
    </citation>
    <scope>NUCLEOTIDE SEQUENCE [LARGE SCALE MRNA]</scope>
</reference>
<reference key="4">
    <citation type="submission" date="2004-10" db="EMBL/GenBank/DDBJ databases">
        <title>Cloning of human full-length CDSs in BD Creator(TM) system donor vector.</title>
        <authorList>
            <person name="Kalnine N."/>
            <person name="Chen X."/>
            <person name="Rolfs A."/>
            <person name="Halleck A."/>
            <person name="Hines L."/>
            <person name="Eisenstein S."/>
            <person name="Koundinya M."/>
            <person name="Raphael J."/>
            <person name="Moreira D."/>
            <person name="Kelley T."/>
            <person name="LaBaer J."/>
            <person name="Lin Y."/>
            <person name="Phelan M."/>
            <person name="Farmer A."/>
        </authorList>
    </citation>
    <scope>NUCLEOTIDE SEQUENCE [LARGE SCALE MRNA]</scope>
</reference>
<reference key="5">
    <citation type="journal article" date="2006" name="Nature">
        <title>The DNA sequence and biological annotation of human chromosome 1.</title>
        <authorList>
            <person name="Gregory S.G."/>
            <person name="Barlow K.F."/>
            <person name="McLay K.E."/>
            <person name="Kaul R."/>
            <person name="Swarbreck D."/>
            <person name="Dunham A."/>
            <person name="Scott C.E."/>
            <person name="Howe K.L."/>
            <person name="Woodfine K."/>
            <person name="Spencer C.C.A."/>
            <person name="Jones M.C."/>
            <person name="Gillson C."/>
            <person name="Searle S."/>
            <person name="Zhou Y."/>
            <person name="Kokocinski F."/>
            <person name="McDonald L."/>
            <person name="Evans R."/>
            <person name="Phillips K."/>
            <person name="Atkinson A."/>
            <person name="Cooper R."/>
            <person name="Jones C."/>
            <person name="Hall R.E."/>
            <person name="Andrews T.D."/>
            <person name="Lloyd C."/>
            <person name="Ainscough R."/>
            <person name="Almeida J.P."/>
            <person name="Ambrose K.D."/>
            <person name="Anderson F."/>
            <person name="Andrew R.W."/>
            <person name="Ashwell R.I.S."/>
            <person name="Aubin K."/>
            <person name="Babbage A.K."/>
            <person name="Bagguley C.L."/>
            <person name="Bailey J."/>
            <person name="Beasley H."/>
            <person name="Bethel G."/>
            <person name="Bird C.P."/>
            <person name="Bray-Allen S."/>
            <person name="Brown J.Y."/>
            <person name="Brown A.J."/>
            <person name="Buckley D."/>
            <person name="Burton J."/>
            <person name="Bye J."/>
            <person name="Carder C."/>
            <person name="Chapman J.C."/>
            <person name="Clark S.Y."/>
            <person name="Clarke G."/>
            <person name="Clee C."/>
            <person name="Cobley V."/>
            <person name="Collier R.E."/>
            <person name="Corby N."/>
            <person name="Coville G.J."/>
            <person name="Davies J."/>
            <person name="Deadman R."/>
            <person name="Dunn M."/>
            <person name="Earthrowl M."/>
            <person name="Ellington A.G."/>
            <person name="Errington H."/>
            <person name="Frankish A."/>
            <person name="Frankland J."/>
            <person name="French L."/>
            <person name="Garner P."/>
            <person name="Garnett J."/>
            <person name="Gay L."/>
            <person name="Ghori M.R.J."/>
            <person name="Gibson R."/>
            <person name="Gilby L.M."/>
            <person name="Gillett W."/>
            <person name="Glithero R.J."/>
            <person name="Grafham D.V."/>
            <person name="Griffiths C."/>
            <person name="Griffiths-Jones S."/>
            <person name="Grocock R."/>
            <person name="Hammond S."/>
            <person name="Harrison E.S.I."/>
            <person name="Hart E."/>
            <person name="Haugen E."/>
            <person name="Heath P.D."/>
            <person name="Holmes S."/>
            <person name="Holt K."/>
            <person name="Howden P.J."/>
            <person name="Hunt A.R."/>
            <person name="Hunt S.E."/>
            <person name="Hunter G."/>
            <person name="Isherwood J."/>
            <person name="James R."/>
            <person name="Johnson C."/>
            <person name="Johnson D."/>
            <person name="Joy A."/>
            <person name="Kay M."/>
            <person name="Kershaw J.K."/>
            <person name="Kibukawa M."/>
            <person name="Kimberley A.M."/>
            <person name="King A."/>
            <person name="Knights A.J."/>
            <person name="Lad H."/>
            <person name="Laird G."/>
            <person name="Lawlor S."/>
            <person name="Leongamornlert D.A."/>
            <person name="Lloyd D.M."/>
            <person name="Loveland J."/>
            <person name="Lovell J."/>
            <person name="Lush M.J."/>
            <person name="Lyne R."/>
            <person name="Martin S."/>
            <person name="Mashreghi-Mohammadi M."/>
            <person name="Matthews L."/>
            <person name="Matthews N.S.W."/>
            <person name="McLaren S."/>
            <person name="Milne S."/>
            <person name="Mistry S."/>
            <person name="Moore M.J.F."/>
            <person name="Nickerson T."/>
            <person name="O'Dell C.N."/>
            <person name="Oliver K."/>
            <person name="Palmeiri A."/>
            <person name="Palmer S.A."/>
            <person name="Parker A."/>
            <person name="Patel D."/>
            <person name="Pearce A.V."/>
            <person name="Peck A.I."/>
            <person name="Pelan S."/>
            <person name="Phelps K."/>
            <person name="Phillimore B.J."/>
            <person name="Plumb R."/>
            <person name="Rajan J."/>
            <person name="Raymond C."/>
            <person name="Rouse G."/>
            <person name="Saenphimmachak C."/>
            <person name="Sehra H.K."/>
            <person name="Sheridan E."/>
            <person name="Shownkeen R."/>
            <person name="Sims S."/>
            <person name="Skuce C.D."/>
            <person name="Smith M."/>
            <person name="Steward C."/>
            <person name="Subramanian S."/>
            <person name="Sycamore N."/>
            <person name="Tracey A."/>
            <person name="Tromans A."/>
            <person name="Van Helmond Z."/>
            <person name="Wall M."/>
            <person name="Wallis J.M."/>
            <person name="White S."/>
            <person name="Whitehead S.L."/>
            <person name="Wilkinson J.E."/>
            <person name="Willey D.L."/>
            <person name="Williams H."/>
            <person name="Wilming L."/>
            <person name="Wray P.W."/>
            <person name="Wu Z."/>
            <person name="Coulson A."/>
            <person name="Vaudin M."/>
            <person name="Sulston J.E."/>
            <person name="Durbin R.M."/>
            <person name="Hubbard T."/>
            <person name="Wooster R."/>
            <person name="Dunham I."/>
            <person name="Carter N.P."/>
            <person name="McVean G."/>
            <person name="Ross M.T."/>
            <person name="Harrow J."/>
            <person name="Olson M.V."/>
            <person name="Beck S."/>
            <person name="Rogers J."/>
            <person name="Bentley D.R."/>
        </authorList>
    </citation>
    <scope>NUCLEOTIDE SEQUENCE [LARGE SCALE GENOMIC DNA]</scope>
</reference>
<reference key="6">
    <citation type="journal article" date="2004" name="Genome Res.">
        <title>The status, quality, and expansion of the NIH full-length cDNA project: the Mammalian Gene Collection (MGC).</title>
        <authorList>
            <consortium name="The MGC Project Team"/>
        </authorList>
    </citation>
    <scope>NUCLEOTIDE SEQUENCE [LARGE SCALE MRNA]</scope>
    <source>
        <tissue>Brain</tissue>
        <tissue>Lung</tissue>
    </source>
</reference>
<reference key="7">
    <citation type="submission" date="2008-12" db="UniProtKB">
        <authorList>
            <person name="Bienvenut W.V."/>
            <person name="Lilla S."/>
            <person name="von Kriegsheim A."/>
            <person name="Lempens A."/>
            <person name="Kolch W."/>
        </authorList>
    </citation>
    <scope>PROTEIN SEQUENCE OF 2-42; 77-85; 87-97; 137-151 AND 192-210</scope>
    <scope>CLEAVAGE OF INITIATOR METHIONINE</scope>
    <scope>ACETYLATION AT ALA-2</scope>
    <scope>IDENTIFICATION BY MASS SPECTROMETRY</scope>
    <source>
        <tissue>Ovarian carcinoma</tissue>
    </source>
</reference>
<reference key="8">
    <citation type="journal article" date="2002" name="Cancer Lett.">
        <title>Amplification of the BCAS2 gene at chromosome 1p13.3-21 in human primary breast cancer.</title>
        <authorList>
            <person name="Maass N."/>
            <person name="Rosel F."/>
            <person name="Schem C."/>
            <person name="Hitomi J."/>
            <person name="Jonat W."/>
            <person name="Nagasaki K."/>
        </authorList>
    </citation>
    <scope>SUBCELLULAR LOCATION</scope>
</reference>
<reference key="9">
    <citation type="journal article" date="2002" name="Mol. Biol. Cell">
        <title>Functional proteomic analysis of human nucleolus.</title>
        <authorList>
            <person name="Scherl A."/>
            <person name="Coute Y."/>
            <person name="Deon C."/>
            <person name="Calle A."/>
            <person name="Kindbeiter K."/>
            <person name="Sanchez J.-C."/>
            <person name="Greco A."/>
            <person name="Hochstrasser D.F."/>
            <person name="Diaz J.-J."/>
        </authorList>
    </citation>
    <scope>SUBCELLULAR LOCATION [LARGE SCALE ANALYSIS]</scope>
    <source>
        <tissue>Cervix carcinoma</tissue>
    </source>
</reference>
<reference key="10">
    <citation type="journal article" date="2009" name="Anal. Chem.">
        <title>Lys-N and trypsin cover complementary parts of the phosphoproteome in a refined SCX-based approach.</title>
        <authorList>
            <person name="Gauci S."/>
            <person name="Helbig A.O."/>
            <person name="Slijper M."/>
            <person name="Krijgsveld J."/>
            <person name="Heck A.J."/>
            <person name="Mohammed S."/>
        </authorList>
    </citation>
    <scope>ACETYLATION [LARGE SCALE ANALYSIS] AT ALA-2</scope>
    <scope>CLEAVAGE OF INITIATOR METHIONINE [LARGE SCALE ANALYSIS]</scope>
    <scope>IDENTIFICATION BY MASS SPECTROMETRY [LARGE SCALE ANALYSIS]</scope>
</reference>
<reference key="11">
    <citation type="journal article" date="2010" name="Mol. Cell. Biol.">
        <title>Molecular architecture of the human Prp19/CDC5L complex.</title>
        <authorList>
            <person name="Grote M."/>
            <person name="Wolf E."/>
            <person name="Will C.L."/>
            <person name="Lemm I."/>
            <person name="Agafonov D.E."/>
            <person name="Schomburg A."/>
            <person name="Fischle W."/>
            <person name="Urlaub H."/>
            <person name="Luhrmann R."/>
        </authorList>
    </citation>
    <scope>IDENTIFICATION AS A COMPONENT OF THE PRP19-CDC5L SPLICING COMPLEX</scope>
    <scope>IDENTIFICATION BY MASS SPECTROMETRY</scope>
    <scope>SUBCELLULAR LOCATION</scope>
    <scope>INTERACTION WITH CDC5L; PLRG1 AND PRPF19</scope>
</reference>
<reference key="12">
    <citation type="journal article" date="2011" name="BMC Syst. Biol.">
        <title>Initial characterization of the human central proteome.</title>
        <authorList>
            <person name="Burkard T.R."/>
            <person name="Planyavsky M."/>
            <person name="Kaupe I."/>
            <person name="Breitwieser F.P."/>
            <person name="Buerckstuemmer T."/>
            <person name="Bennett K.L."/>
            <person name="Superti-Furga G."/>
            <person name="Colinge J."/>
        </authorList>
    </citation>
    <scope>IDENTIFICATION BY MASS SPECTROMETRY [LARGE SCALE ANALYSIS]</scope>
</reference>
<reference key="13">
    <citation type="journal article" date="2012" name="Proc. Natl. Acad. Sci. U.S.A.">
        <title>N-terminal acetylome analyses and functional insights of the N-terminal acetyltransferase NatB.</title>
        <authorList>
            <person name="Van Damme P."/>
            <person name="Lasa M."/>
            <person name="Polevoda B."/>
            <person name="Gazquez C."/>
            <person name="Elosegui-Artola A."/>
            <person name="Kim D.S."/>
            <person name="De Juan-Pardo E."/>
            <person name="Demeyer K."/>
            <person name="Hole K."/>
            <person name="Larrea E."/>
            <person name="Timmerman E."/>
            <person name="Prieto J."/>
            <person name="Arnesen T."/>
            <person name="Sherman F."/>
            <person name="Gevaert K."/>
            <person name="Aldabe R."/>
        </authorList>
    </citation>
    <scope>ACETYLATION [LARGE SCALE ANALYSIS] AT ALA-2</scope>
    <scope>CLEAVAGE OF INITIATOR METHIONINE [LARGE SCALE ANALYSIS]</scope>
    <scope>IDENTIFICATION BY MASS SPECTROMETRY [LARGE SCALE ANALYSIS]</scope>
</reference>
<reference key="14">
    <citation type="journal article" date="2013" name="J. Proteome Res.">
        <title>Toward a comprehensive characterization of a human cancer cell phosphoproteome.</title>
        <authorList>
            <person name="Zhou H."/>
            <person name="Di Palma S."/>
            <person name="Preisinger C."/>
            <person name="Peng M."/>
            <person name="Polat A.N."/>
            <person name="Heck A.J."/>
            <person name="Mohammed S."/>
        </authorList>
    </citation>
    <scope>PHOSPHORYLATION [LARGE SCALE ANALYSIS] AT SER-94</scope>
    <scope>IDENTIFICATION BY MASS SPECTROMETRY [LARGE SCALE ANALYSIS]</scope>
    <source>
        <tissue>Cervix carcinoma</tissue>
        <tissue>Erythroleukemia</tissue>
    </source>
</reference>
<reference key="15">
    <citation type="journal article" date="2014" name="Mol. Cell">
        <title>PRP19 transforms into a sensor of RPA-ssDNA after DNA damage and drives ATR activation via a ubiquitin-mediated circuitry.</title>
        <authorList>
            <person name="Marechal A."/>
            <person name="Li J.M."/>
            <person name="Ji X.Y."/>
            <person name="Wu C.S."/>
            <person name="Yazinski S.A."/>
            <person name="Nguyen H.D."/>
            <person name="Liu S."/>
            <person name="Jimenez A.E."/>
            <person name="Jin J."/>
            <person name="Zou L."/>
        </authorList>
    </citation>
    <scope>FUNCTION</scope>
</reference>
<reference evidence="18" key="16">
    <citation type="journal article" date="2017" name="Cell">
        <title>An Atomic Structure of the Human Spliceosome.</title>
        <authorList>
            <person name="Zhang X."/>
            <person name="Yan C."/>
            <person name="Hang J."/>
            <person name="Finci L.I."/>
            <person name="Lei J."/>
            <person name="Shi Y."/>
        </authorList>
    </citation>
    <scope>STRUCTURE BY ELECTRON MICROSCOPY (3.60 ANGSTROMS)</scope>
    <scope>FUNCTION</scope>
    <scope>SUBCELLULAR LOCATION</scope>
    <scope>SUBUNIT</scope>
</reference>
<reference evidence="17" key="17">
    <citation type="journal article" date="2017" name="Nature">
        <title>Cryo-EM structure of a human spliceosome activated for step 2 of splicing.</title>
        <authorList>
            <person name="Bertram K."/>
            <person name="Agafonov D.E."/>
            <person name="Liu W.T."/>
            <person name="Dybkov O."/>
            <person name="Will C.L."/>
            <person name="Hartmuth K."/>
            <person name="Urlaub H."/>
            <person name="Kastner B."/>
            <person name="Stark H."/>
            <person name="Luhrmann R."/>
        </authorList>
    </citation>
    <scope>STRUCTURE BY ELECTRON MICROSCOPY (5.90 ANGSTROMS)</scope>
    <scope>FUNCTION</scope>
    <scope>SUBCELLULAR LOCATION</scope>
    <scope>SUBUNIT</scope>
</reference>
<reference evidence="20 21" key="18">
    <citation type="journal article" date="2018" name="Cell Res.">
        <title>Structure of the human activated spliceosome in three conformational states.</title>
        <authorList>
            <person name="Zhang X."/>
            <person name="Yan C."/>
            <person name="Zhan X."/>
            <person name="Li L."/>
            <person name="Lei J."/>
            <person name="Shi Y."/>
        </authorList>
    </citation>
    <scope>STRUCTURE BY ELECTRON MICROSCOPY (5.10 ANGSTROMS)</scope>
    <scope>FUNCTION</scope>
    <scope>SUBCELLULAR LOCATION</scope>
    <scope>SUBUNIT</scope>
</reference>
<reference evidence="19" key="19">
    <citation type="journal article" date="2018" name="Science">
        <title>Structure of a human catalytic step I spliceosome.</title>
        <authorList>
            <person name="Zhan X."/>
            <person name="Yan C."/>
            <person name="Zhang X."/>
            <person name="Lei J."/>
            <person name="Shi Y."/>
        </authorList>
    </citation>
    <scope>STRUCTURE BY ELECTRON MICROSCOPY (4.10 ANGSTROMS)</scope>
    <scope>FUNCTION</scope>
    <scope>SUBCELLULAR LOCATION</scope>
    <scope>SUBUNIT</scope>
</reference>
<reference evidence="22" key="20">
    <citation type="journal article" date="2019" name="Science">
        <title>A human postcatalytic spliceosome structure reveals essential roles of metazoan factors for exon ligation.</title>
        <authorList>
            <person name="Fica S.M."/>
            <person name="Oubridge C."/>
            <person name="Wilkinson M.E."/>
            <person name="Newman A.J."/>
            <person name="Nagai K."/>
        </authorList>
    </citation>
    <scope>STRUCTURE BY ELECTRON MICROSCOPY (3.30 ANGSTROMS)</scope>
    <scope>FUNCTION</scope>
    <scope>SUBCELLULAR LOCATION</scope>
    <scope>SUBUNIT</scope>
</reference>
<reference key="21">
    <citation type="journal article" date="2006" name="Science">
        <title>The consensus coding sequences of human breast and colorectal cancers.</title>
        <authorList>
            <person name="Sjoeblom T."/>
            <person name="Jones S."/>
            <person name="Wood L.D."/>
            <person name="Parsons D.W."/>
            <person name="Lin J."/>
            <person name="Barber T.D."/>
            <person name="Mandelker D."/>
            <person name="Leary R.J."/>
            <person name="Ptak J."/>
            <person name="Silliman N."/>
            <person name="Szabo S."/>
            <person name="Buckhaults P."/>
            <person name="Farrell C."/>
            <person name="Meeh P."/>
            <person name="Markowitz S.D."/>
            <person name="Willis J."/>
            <person name="Dawson D."/>
            <person name="Willson J.K.V."/>
            <person name="Gazdar A.F."/>
            <person name="Hartigan J."/>
            <person name="Wu L."/>
            <person name="Liu C."/>
            <person name="Parmigiani G."/>
            <person name="Park B.H."/>
            <person name="Bachman K.E."/>
            <person name="Papadopoulos N."/>
            <person name="Vogelstein B."/>
            <person name="Kinzler K.W."/>
            <person name="Velculescu V.E."/>
        </authorList>
    </citation>
    <scope>VARIANT [LARGE SCALE ANALYSIS] SER-139</scope>
</reference>
<sequence>MAGTGLVAGEVVVDALPYFDQGYEAPGVREAAAALVEEETRRYRPTKNYLSYLTAPDYSAFETDIMRNEFERLAARQPIELLSMKRYELPAPSSGQKNDITAWQECVNNSMAQLEHQAVRIENLELMSQHGCNAWKVYNENLVHMIEHAQKELQKLRKHIQDLNWQRKNMQLTAGSKLREMESNWVSLVSKNYEIERTIVQLENEIYQIKQQHGEANKENIRQDF</sequence>
<organism>
    <name type="scientific">Homo sapiens</name>
    <name type="common">Human</name>
    <dbReference type="NCBI Taxonomy" id="9606"/>
    <lineage>
        <taxon>Eukaryota</taxon>
        <taxon>Metazoa</taxon>
        <taxon>Chordata</taxon>
        <taxon>Craniata</taxon>
        <taxon>Vertebrata</taxon>
        <taxon>Euteleostomi</taxon>
        <taxon>Mammalia</taxon>
        <taxon>Eutheria</taxon>
        <taxon>Euarchontoglires</taxon>
        <taxon>Primates</taxon>
        <taxon>Haplorrhini</taxon>
        <taxon>Catarrhini</taxon>
        <taxon>Hominidae</taxon>
        <taxon>Homo</taxon>
    </lineage>
</organism>